<protein>
    <recommendedName>
        <fullName evidence="1">Pantothenate synthetase</fullName>
        <shortName evidence="1">PS</shortName>
        <ecNumber evidence="1">6.3.2.1</ecNumber>
    </recommendedName>
    <alternativeName>
        <fullName evidence="1">Pantoate--beta-alanine ligase</fullName>
    </alternativeName>
    <alternativeName>
        <fullName evidence="1">Pantoate-activating enzyme</fullName>
    </alternativeName>
</protein>
<comment type="function">
    <text evidence="1">Catalyzes the condensation of pantoate with beta-alanine in an ATP-dependent reaction via a pantoyl-adenylate intermediate.</text>
</comment>
<comment type="catalytic activity">
    <reaction evidence="1">
        <text>(R)-pantoate + beta-alanine + ATP = (R)-pantothenate + AMP + diphosphate + H(+)</text>
        <dbReference type="Rhea" id="RHEA:10912"/>
        <dbReference type="ChEBI" id="CHEBI:15378"/>
        <dbReference type="ChEBI" id="CHEBI:15980"/>
        <dbReference type="ChEBI" id="CHEBI:29032"/>
        <dbReference type="ChEBI" id="CHEBI:30616"/>
        <dbReference type="ChEBI" id="CHEBI:33019"/>
        <dbReference type="ChEBI" id="CHEBI:57966"/>
        <dbReference type="ChEBI" id="CHEBI:456215"/>
        <dbReference type="EC" id="6.3.2.1"/>
    </reaction>
</comment>
<comment type="pathway">
    <text evidence="1">Cofactor biosynthesis; (R)-pantothenate biosynthesis; (R)-pantothenate from (R)-pantoate and beta-alanine: step 1/1.</text>
</comment>
<comment type="subunit">
    <text evidence="1">Homodimer.</text>
</comment>
<comment type="subcellular location">
    <subcellularLocation>
        <location evidence="1">Cytoplasm</location>
    </subcellularLocation>
</comment>
<comment type="miscellaneous">
    <text evidence="1">The reaction proceeds by a bi uni uni bi ping pong mechanism.</text>
</comment>
<comment type="similarity">
    <text evidence="1">Belongs to the pantothenate synthetase family.</text>
</comment>
<keyword id="KW-0067">ATP-binding</keyword>
<keyword id="KW-0963">Cytoplasm</keyword>
<keyword id="KW-0436">Ligase</keyword>
<keyword id="KW-0547">Nucleotide-binding</keyword>
<keyword id="KW-0566">Pantothenate biosynthesis</keyword>
<keyword id="KW-1185">Reference proteome</keyword>
<sequence>METFTSIDAMRAWCREKSRGGNTIGLVPTMGALHEGHLSLVHAAKKDCDHCVTSIFVNPTQFAANEDLDQYPRPIEDDLAMLRDAGVEAVFMPTADEMYPGGPQTHATSVHPSAVAFPLEGVHRPEHFVGVATVVMKLFQAAPSDRAFFGRKDLQQLCVIEHMVRDLNLPIEIVPCDIVREPDGLAMSSRNRYLSDDQRQRALCISKSLNQVEQAFLEGNHDPKQLESIMADHLSPCDSVDYAVVVDRQTLLPISEITQNAVALVAVRVGVTRLIDNRELIVA</sequence>
<accession>Q7UTQ8</accession>
<organism>
    <name type="scientific">Rhodopirellula baltica (strain DSM 10527 / NCIMB 13988 / SH1)</name>
    <dbReference type="NCBI Taxonomy" id="243090"/>
    <lineage>
        <taxon>Bacteria</taxon>
        <taxon>Pseudomonadati</taxon>
        <taxon>Planctomycetota</taxon>
        <taxon>Planctomycetia</taxon>
        <taxon>Pirellulales</taxon>
        <taxon>Pirellulaceae</taxon>
        <taxon>Rhodopirellula</taxon>
    </lineage>
</organism>
<feature type="chain" id="PRO_0000305531" description="Pantothenate synthetase">
    <location>
        <begin position="1"/>
        <end position="283"/>
    </location>
</feature>
<feature type="active site" description="Proton donor" evidence="1">
    <location>
        <position position="37"/>
    </location>
</feature>
<feature type="binding site" evidence="1">
    <location>
        <begin position="30"/>
        <end position="37"/>
    </location>
    <ligand>
        <name>ATP</name>
        <dbReference type="ChEBI" id="CHEBI:30616"/>
    </ligand>
</feature>
<feature type="binding site" evidence="1">
    <location>
        <position position="61"/>
    </location>
    <ligand>
        <name>(R)-pantoate</name>
        <dbReference type="ChEBI" id="CHEBI:15980"/>
    </ligand>
</feature>
<feature type="binding site" evidence="1">
    <location>
        <position position="61"/>
    </location>
    <ligand>
        <name>beta-alanine</name>
        <dbReference type="ChEBI" id="CHEBI:57966"/>
    </ligand>
</feature>
<feature type="binding site" evidence="1">
    <location>
        <begin position="150"/>
        <end position="153"/>
    </location>
    <ligand>
        <name>ATP</name>
        <dbReference type="ChEBI" id="CHEBI:30616"/>
    </ligand>
</feature>
<feature type="binding site" evidence="1">
    <location>
        <position position="156"/>
    </location>
    <ligand>
        <name>(R)-pantoate</name>
        <dbReference type="ChEBI" id="CHEBI:15980"/>
    </ligand>
</feature>
<feature type="binding site" evidence="1">
    <location>
        <position position="179"/>
    </location>
    <ligand>
        <name>ATP</name>
        <dbReference type="ChEBI" id="CHEBI:30616"/>
    </ligand>
</feature>
<feature type="binding site" evidence="1">
    <location>
        <begin position="187"/>
        <end position="190"/>
    </location>
    <ligand>
        <name>ATP</name>
        <dbReference type="ChEBI" id="CHEBI:30616"/>
    </ligand>
</feature>
<dbReference type="EC" id="6.3.2.1" evidence="1"/>
<dbReference type="EMBL" id="BX294139">
    <property type="protein sequence ID" value="CAD73378.1"/>
    <property type="molecule type" value="Genomic_DNA"/>
</dbReference>
<dbReference type="RefSeq" id="NP_865693.1">
    <property type="nucleotide sequence ID" value="NC_005027.1"/>
</dbReference>
<dbReference type="RefSeq" id="WP_011119525.1">
    <property type="nucleotide sequence ID" value="NC_005027.1"/>
</dbReference>
<dbReference type="SMR" id="Q7UTQ8"/>
<dbReference type="FunCoup" id="Q7UTQ8">
    <property type="interactions" value="515"/>
</dbReference>
<dbReference type="STRING" id="243090.RB3735"/>
<dbReference type="EnsemblBacteria" id="CAD73378">
    <property type="protein sequence ID" value="CAD73378"/>
    <property type="gene ID" value="RB3735"/>
</dbReference>
<dbReference type="KEGG" id="rba:RB3735"/>
<dbReference type="PATRIC" id="fig|243090.15.peg.1737"/>
<dbReference type="eggNOG" id="COG0414">
    <property type="taxonomic scope" value="Bacteria"/>
</dbReference>
<dbReference type="HOGENOM" id="CLU_047148_0_0_0"/>
<dbReference type="InParanoid" id="Q7UTQ8"/>
<dbReference type="OrthoDB" id="9773087at2"/>
<dbReference type="UniPathway" id="UPA00028">
    <property type="reaction ID" value="UER00005"/>
</dbReference>
<dbReference type="Proteomes" id="UP000001025">
    <property type="component" value="Chromosome"/>
</dbReference>
<dbReference type="GO" id="GO:0005829">
    <property type="term" value="C:cytosol"/>
    <property type="evidence" value="ECO:0000318"/>
    <property type="project" value="GO_Central"/>
</dbReference>
<dbReference type="GO" id="GO:0005524">
    <property type="term" value="F:ATP binding"/>
    <property type="evidence" value="ECO:0007669"/>
    <property type="project" value="UniProtKB-KW"/>
</dbReference>
<dbReference type="GO" id="GO:0004592">
    <property type="term" value="F:pantoate-beta-alanine ligase activity"/>
    <property type="evidence" value="ECO:0000318"/>
    <property type="project" value="GO_Central"/>
</dbReference>
<dbReference type="GO" id="GO:0015940">
    <property type="term" value="P:pantothenate biosynthetic process"/>
    <property type="evidence" value="ECO:0000318"/>
    <property type="project" value="GO_Central"/>
</dbReference>
<dbReference type="CDD" id="cd00560">
    <property type="entry name" value="PanC"/>
    <property type="match status" value="1"/>
</dbReference>
<dbReference type="FunFam" id="3.30.1300.10:FF:000001">
    <property type="entry name" value="Pantothenate synthetase"/>
    <property type="match status" value="1"/>
</dbReference>
<dbReference type="FunFam" id="3.40.50.620:FF:000114">
    <property type="entry name" value="Pantothenate synthetase"/>
    <property type="match status" value="1"/>
</dbReference>
<dbReference type="Gene3D" id="3.40.50.620">
    <property type="entry name" value="HUPs"/>
    <property type="match status" value="1"/>
</dbReference>
<dbReference type="Gene3D" id="3.30.1300.10">
    <property type="entry name" value="Pantoate-beta-alanine ligase, C-terminal domain"/>
    <property type="match status" value="1"/>
</dbReference>
<dbReference type="HAMAP" id="MF_00158">
    <property type="entry name" value="PanC"/>
    <property type="match status" value="1"/>
</dbReference>
<dbReference type="InterPro" id="IPR003721">
    <property type="entry name" value="Pantoate_ligase"/>
</dbReference>
<dbReference type="InterPro" id="IPR042176">
    <property type="entry name" value="Pantoate_ligase_C"/>
</dbReference>
<dbReference type="InterPro" id="IPR014729">
    <property type="entry name" value="Rossmann-like_a/b/a_fold"/>
</dbReference>
<dbReference type="NCBIfam" id="TIGR00018">
    <property type="entry name" value="panC"/>
    <property type="match status" value="1"/>
</dbReference>
<dbReference type="PANTHER" id="PTHR21299">
    <property type="entry name" value="CYTIDYLATE KINASE/PANTOATE-BETA-ALANINE LIGASE"/>
    <property type="match status" value="1"/>
</dbReference>
<dbReference type="PANTHER" id="PTHR21299:SF1">
    <property type="entry name" value="PANTOATE--BETA-ALANINE LIGASE"/>
    <property type="match status" value="1"/>
</dbReference>
<dbReference type="Pfam" id="PF02569">
    <property type="entry name" value="Pantoate_ligase"/>
    <property type="match status" value="1"/>
</dbReference>
<dbReference type="SUPFAM" id="SSF52374">
    <property type="entry name" value="Nucleotidylyl transferase"/>
    <property type="match status" value="1"/>
</dbReference>
<proteinExistence type="inferred from homology"/>
<gene>
    <name evidence="1" type="primary">panC</name>
    <name type="ordered locus">RB3735</name>
</gene>
<name>PANC_RHOBA</name>
<reference key="1">
    <citation type="journal article" date="2003" name="Proc. Natl. Acad. Sci. U.S.A.">
        <title>Complete genome sequence of the marine planctomycete Pirellula sp. strain 1.</title>
        <authorList>
            <person name="Gloeckner F.O."/>
            <person name="Kube M."/>
            <person name="Bauer M."/>
            <person name="Teeling H."/>
            <person name="Lombardot T."/>
            <person name="Ludwig W."/>
            <person name="Gade D."/>
            <person name="Beck A."/>
            <person name="Borzym K."/>
            <person name="Heitmann K."/>
            <person name="Rabus R."/>
            <person name="Schlesner H."/>
            <person name="Amann R."/>
            <person name="Reinhardt R."/>
        </authorList>
    </citation>
    <scope>NUCLEOTIDE SEQUENCE [LARGE SCALE GENOMIC DNA]</scope>
    <source>
        <strain>DSM 10527 / NCIMB 13988 / SH1</strain>
    </source>
</reference>
<evidence type="ECO:0000255" key="1">
    <source>
        <dbReference type="HAMAP-Rule" id="MF_00158"/>
    </source>
</evidence>